<protein>
    <recommendedName>
        <fullName evidence="1">6-carboxyhexanoate--CoA ligase</fullName>
        <ecNumber evidence="1">6.2.1.14</ecNumber>
    </recommendedName>
    <alternativeName>
        <fullName evidence="1">Pimeloyl-CoA synthase</fullName>
    </alternativeName>
</protein>
<proteinExistence type="inferred from homology"/>
<evidence type="ECO:0000255" key="1">
    <source>
        <dbReference type="HAMAP-Rule" id="MF_00668"/>
    </source>
</evidence>
<feature type="chain" id="PRO_0000191020" description="6-carboxyhexanoate--CoA ligase">
    <location>
        <begin position="1"/>
        <end position="230"/>
    </location>
</feature>
<comment type="function">
    <text evidence="1">Catalyzes the transformation of pimelate into pimeloyl-CoA with concomitant hydrolysis of ATP to AMP.</text>
</comment>
<comment type="catalytic activity">
    <reaction evidence="1">
        <text>heptanedioate + ATP + CoA = 6-carboxyhexanoyl-CoA + AMP + diphosphate</text>
        <dbReference type="Rhea" id="RHEA:14781"/>
        <dbReference type="ChEBI" id="CHEBI:30616"/>
        <dbReference type="ChEBI" id="CHEBI:33019"/>
        <dbReference type="ChEBI" id="CHEBI:36165"/>
        <dbReference type="ChEBI" id="CHEBI:57287"/>
        <dbReference type="ChEBI" id="CHEBI:57360"/>
        <dbReference type="ChEBI" id="CHEBI:456215"/>
        <dbReference type="EC" id="6.2.1.14"/>
    </reaction>
</comment>
<comment type="cofactor">
    <cofactor evidence="1">
        <name>Mg(2+)</name>
        <dbReference type="ChEBI" id="CHEBI:18420"/>
    </cofactor>
</comment>
<comment type="pathway">
    <text evidence="1">Metabolic intermediate metabolism; pimeloyl-CoA biosynthesis; pimeloyl-CoA from pimelate: step 1/1.</text>
</comment>
<comment type="subunit">
    <text evidence="1">Homodimer.</text>
</comment>
<comment type="similarity">
    <text evidence="1">Belongs to the BioW family.</text>
</comment>
<organism>
    <name type="scientific">Staphylococcus aureus (strain MRSA252)</name>
    <dbReference type="NCBI Taxonomy" id="282458"/>
    <lineage>
        <taxon>Bacteria</taxon>
        <taxon>Bacillati</taxon>
        <taxon>Bacillota</taxon>
        <taxon>Bacilli</taxon>
        <taxon>Bacillales</taxon>
        <taxon>Staphylococcaceae</taxon>
        <taxon>Staphylococcus</taxon>
    </lineage>
</organism>
<name>BIOW_STAAR</name>
<dbReference type="EC" id="6.2.1.14" evidence="1"/>
<dbReference type="EMBL" id="BX571856">
    <property type="protein sequence ID" value="CAG41493.1"/>
    <property type="molecule type" value="Genomic_DNA"/>
</dbReference>
<dbReference type="RefSeq" id="WP_000286868.1">
    <property type="nucleotide sequence ID" value="NC_002952.2"/>
</dbReference>
<dbReference type="SMR" id="Q6GE10"/>
<dbReference type="KEGG" id="sar:SAR2513"/>
<dbReference type="HOGENOM" id="CLU_076858_0_0_9"/>
<dbReference type="UniPathway" id="UPA00999">
    <property type="reaction ID" value="UER00351"/>
</dbReference>
<dbReference type="Proteomes" id="UP000000596">
    <property type="component" value="Chromosome"/>
</dbReference>
<dbReference type="GO" id="GO:0042410">
    <property type="term" value="F:6-carboxyhexanoate-CoA ligase activity"/>
    <property type="evidence" value="ECO:0007669"/>
    <property type="project" value="UniProtKB-UniRule"/>
</dbReference>
<dbReference type="GO" id="GO:0005524">
    <property type="term" value="F:ATP binding"/>
    <property type="evidence" value="ECO:0007669"/>
    <property type="project" value="UniProtKB-KW"/>
</dbReference>
<dbReference type="GO" id="GO:0000287">
    <property type="term" value="F:magnesium ion binding"/>
    <property type="evidence" value="ECO:0007669"/>
    <property type="project" value="UniProtKB-UniRule"/>
</dbReference>
<dbReference type="GO" id="GO:0009102">
    <property type="term" value="P:biotin biosynthetic process"/>
    <property type="evidence" value="ECO:0007669"/>
    <property type="project" value="UniProtKB-UniRule"/>
</dbReference>
<dbReference type="HAMAP" id="MF_00668">
    <property type="entry name" value="BioW"/>
    <property type="match status" value="1"/>
</dbReference>
<dbReference type="InterPro" id="IPR005499">
    <property type="entry name" value="BioW"/>
</dbReference>
<dbReference type="NCBIfam" id="NF002360">
    <property type="entry name" value="PRK01322.1"/>
    <property type="match status" value="1"/>
</dbReference>
<dbReference type="Pfam" id="PF03744">
    <property type="entry name" value="BioW"/>
    <property type="match status" value="1"/>
</dbReference>
<gene>
    <name evidence="1" type="primary">bioW</name>
    <name type="ordered locus">SAR2513</name>
</gene>
<sequence>MYSIKMRSSNQDIHISGAETICEFDKIEQTVQRFYNKGFFHENGQPDFLNIKIQKIMEPIKQIKALQIIEDDKANLQHLTQKCGVTEQALNQGMTYIKNETVYTGAIILSAISGKRLDSFGHRGIRATHFSFEDINNKGDLNERVTDALAIASCINAHPYVKGELCVSDDLTYTTGYFASAKIGYHRLFDIKPVNTRYGGRIIFVDDRIDLNHYILFLESTPKQVVYETV</sequence>
<reference key="1">
    <citation type="journal article" date="2004" name="Proc. Natl. Acad. Sci. U.S.A.">
        <title>Complete genomes of two clinical Staphylococcus aureus strains: evidence for the rapid evolution of virulence and drug resistance.</title>
        <authorList>
            <person name="Holden M.T.G."/>
            <person name="Feil E.J."/>
            <person name="Lindsay J.A."/>
            <person name="Peacock S.J."/>
            <person name="Day N.P.J."/>
            <person name="Enright M.C."/>
            <person name="Foster T.J."/>
            <person name="Moore C.E."/>
            <person name="Hurst L."/>
            <person name="Atkin R."/>
            <person name="Barron A."/>
            <person name="Bason N."/>
            <person name="Bentley S.D."/>
            <person name="Chillingworth C."/>
            <person name="Chillingworth T."/>
            <person name="Churcher C."/>
            <person name="Clark L."/>
            <person name="Corton C."/>
            <person name="Cronin A."/>
            <person name="Doggett J."/>
            <person name="Dowd L."/>
            <person name="Feltwell T."/>
            <person name="Hance Z."/>
            <person name="Harris B."/>
            <person name="Hauser H."/>
            <person name="Holroyd S."/>
            <person name="Jagels K."/>
            <person name="James K.D."/>
            <person name="Lennard N."/>
            <person name="Line A."/>
            <person name="Mayes R."/>
            <person name="Moule S."/>
            <person name="Mungall K."/>
            <person name="Ormond D."/>
            <person name="Quail M.A."/>
            <person name="Rabbinowitsch E."/>
            <person name="Rutherford K.M."/>
            <person name="Sanders M."/>
            <person name="Sharp S."/>
            <person name="Simmonds M."/>
            <person name="Stevens K."/>
            <person name="Whitehead S."/>
            <person name="Barrell B.G."/>
            <person name="Spratt B.G."/>
            <person name="Parkhill J."/>
        </authorList>
    </citation>
    <scope>NUCLEOTIDE SEQUENCE [LARGE SCALE GENOMIC DNA]</scope>
    <source>
        <strain>MRSA252</strain>
    </source>
</reference>
<keyword id="KW-0067">ATP-binding</keyword>
<keyword id="KW-0093">Biotin biosynthesis</keyword>
<keyword id="KW-0436">Ligase</keyword>
<keyword id="KW-0460">Magnesium</keyword>
<keyword id="KW-0547">Nucleotide-binding</keyword>
<accession>Q6GE10</accession>